<feature type="chain" id="PRO_0000321195" description="Ribosome-binding factor A">
    <location>
        <begin position="1"/>
        <end position="123"/>
    </location>
</feature>
<evidence type="ECO:0000255" key="1">
    <source>
        <dbReference type="HAMAP-Rule" id="MF_00003"/>
    </source>
</evidence>
<keyword id="KW-0963">Cytoplasm</keyword>
<keyword id="KW-1185">Reference proteome</keyword>
<keyword id="KW-0690">Ribosome biogenesis</keyword>
<name>RBFA_KORVE</name>
<gene>
    <name evidence="1" type="primary">rbfA</name>
    <name type="ordered locus">Acid345_4215</name>
</gene>
<dbReference type="EMBL" id="CP000360">
    <property type="protein sequence ID" value="ABF43215.1"/>
    <property type="molecule type" value="Genomic_DNA"/>
</dbReference>
<dbReference type="RefSeq" id="WP_011525014.1">
    <property type="nucleotide sequence ID" value="NC_008009.1"/>
</dbReference>
<dbReference type="SMR" id="Q1IIT5"/>
<dbReference type="STRING" id="204669.Acid345_4215"/>
<dbReference type="EnsemblBacteria" id="ABF43215">
    <property type="protein sequence ID" value="ABF43215"/>
    <property type="gene ID" value="Acid345_4215"/>
</dbReference>
<dbReference type="KEGG" id="aba:Acid345_4215"/>
<dbReference type="eggNOG" id="COG0858">
    <property type="taxonomic scope" value="Bacteria"/>
</dbReference>
<dbReference type="HOGENOM" id="CLU_089475_6_2_0"/>
<dbReference type="OrthoDB" id="129771at2"/>
<dbReference type="Proteomes" id="UP000002432">
    <property type="component" value="Chromosome"/>
</dbReference>
<dbReference type="GO" id="GO:0005829">
    <property type="term" value="C:cytosol"/>
    <property type="evidence" value="ECO:0007669"/>
    <property type="project" value="TreeGrafter"/>
</dbReference>
<dbReference type="GO" id="GO:0043024">
    <property type="term" value="F:ribosomal small subunit binding"/>
    <property type="evidence" value="ECO:0007669"/>
    <property type="project" value="TreeGrafter"/>
</dbReference>
<dbReference type="GO" id="GO:0030490">
    <property type="term" value="P:maturation of SSU-rRNA"/>
    <property type="evidence" value="ECO:0007669"/>
    <property type="project" value="UniProtKB-UniRule"/>
</dbReference>
<dbReference type="Gene3D" id="3.30.300.20">
    <property type="match status" value="1"/>
</dbReference>
<dbReference type="HAMAP" id="MF_00003">
    <property type="entry name" value="RbfA"/>
    <property type="match status" value="1"/>
</dbReference>
<dbReference type="InterPro" id="IPR015946">
    <property type="entry name" value="KH_dom-like_a/b"/>
</dbReference>
<dbReference type="InterPro" id="IPR000238">
    <property type="entry name" value="RbfA"/>
</dbReference>
<dbReference type="InterPro" id="IPR023799">
    <property type="entry name" value="RbfA_dom_sf"/>
</dbReference>
<dbReference type="InterPro" id="IPR020053">
    <property type="entry name" value="Ribosome-bd_factorA_CS"/>
</dbReference>
<dbReference type="NCBIfam" id="TIGR00082">
    <property type="entry name" value="rbfA"/>
    <property type="match status" value="1"/>
</dbReference>
<dbReference type="PANTHER" id="PTHR33515">
    <property type="entry name" value="RIBOSOME-BINDING FACTOR A, CHLOROPLASTIC-RELATED"/>
    <property type="match status" value="1"/>
</dbReference>
<dbReference type="PANTHER" id="PTHR33515:SF1">
    <property type="entry name" value="RIBOSOME-BINDING FACTOR A, CHLOROPLASTIC-RELATED"/>
    <property type="match status" value="1"/>
</dbReference>
<dbReference type="Pfam" id="PF02033">
    <property type="entry name" value="RBFA"/>
    <property type="match status" value="1"/>
</dbReference>
<dbReference type="SUPFAM" id="SSF89919">
    <property type="entry name" value="Ribosome-binding factor A, RbfA"/>
    <property type="match status" value="1"/>
</dbReference>
<dbReference type="PROSITE" id="PS01319">
    <property type="entry name" value="RBFA"/>
    <property type="match status" value="1"/>
</dbReference>
<accession>Q1IIT5</accession>
<protein>
    <recommendedName>
        <fullName evidence="1">Ribosome-binding factor A</fullName>
    </recommendedName>
</protein>
<comment type="function">
    <text evidence="1">One of several proteins that assist in the late maturation steps of the functional core of the 30S ribosomal subunit. Associates with free 30S ribosomal subunits (but not with 30S subunits that are part of 70S ribosomes or polysomes). Required for efficient processing of 16S rRNA. May interact with the 5'-terminal helix region of 16S rRNA.</text>
</comment>
<comment type="subunit">
    <text evidence="1">Monomer. Binds 30S ribosomal subunits, but not 50S ribosomal subunits or 70S ribosomes.</text>
</comment>
<comment type="subcellular location">
    <subcellularLocation>
        <location evidence="1">Cytoplasm</location>
    </subcellularLocation>
</comment>
<comment type="similarity">
    <text evidence="1">Belongs to the RbfA family.</text>
</comment>
<sequence>MEQRALKHHRERLGEAIREEIGAILEGELGDPRIGLVTVSEVMIASNGKSAIVLVAVAGEEQEAVDTLEGLAAATGYIRHEVAARLGLRVAPELLFRLDQTERYGGRVEELLKRVNKRKKSSR</sequence>
<proteinExistence type="inferred from homology"/>
<organism>
    <name type="scientific">Koribacter versatilis (strain Ellin345)</name>
    <dbReference type="NCBI Taxonomy" id="204669"/>
    <lineage>
        <taxon>Bacteria</taxon>
        <taxon>Pseudomonadati</taxon>
        <taxon>Acidobacteriota</taxon>
        <taxon>Terriglobia</taxon>
        <taxon>Terriglobales</taxon>
        <taxon>Candidatus Korobacteraceae</taxon>
        <taxon>Candidatus Korobacter</taxon>
    </lineage>
</organism>
<reference key="1">
    <citation type="journal article" date="2009" name="Appl. Environ. Microbiol.">
        <title>Three genomes from the phylum Acidobacteria provide insight into the lifestyles of these microorganisms in soils.</title>
        <authorList>
            <person name="Ward N.L."/>
            <person name="Challacombe J.F."/>
            <person name="Janssen P.H."/>
            <person name="Henrissat B."/>
            <person name="Coutinho P.M."/>
            <person name="Wu M."/>
            <person name="Xie G."/>
            <person name="Haft D.H."/>
            <person name="Sait M."/>
            <person name="Badger J."/>
            <person name="Barabote R.D."/>
            <person name="Bradley B."/>
            <person name="Brettin T.S."/>
            <person name="Brinkac L.M."/>
            <person name="Bruce D."/>
            <person name="Creasy T."/>
            <person name="Daugherty S.C."/>
            <person name="Davidsen T.M."/>
            <person name="DeBoy R.T."/>
            <person name="Detter J.C."/>
            <person name="Dodson R.J."/>
            <person name="Durkin A.S."/>
            <person name="Ganapathy A."/>
            <person name="Gwinn-Giglio M."/>
            <person name="Han C.S."/>
            <person name="Khouri H."/>
            <person name="Kiss H."/>
            <person name="Kothari S.P."/>
            <person name="Madupu R."/>
            <person name="Nelson K.E."/>
            <person name="Nelson W.C."/>
            <person name="Paulsen I."/>
            <person name="Penn K."/>
            <person name="Ren Q."/>
            <person name="Rosovitz M.J."/>
            <person name="Selengut J.D."/>
            <person name="Shrivastava S."/>
            <person name="Sullivan S.A."/>
            <person name="Tapia R."/>
            <person name="Thompson L.S."/>
            <person name="Watkins K.L."/>
            <person name="Yang Q."/>
            <person name="Yu C."/>
            <person name="Zafar N."/>
            <person name="Zhou L."/>
            <person name="Kuske C.R."/>
        </authorList>
    </citation>
    <scope>NUCLEOTIDE SEQUENCE [LARGE SCALE GENOMIC DNA]</scope>
    <source>
        <strain>Ellin345</strain>
    </source>
</reference>